<sequence length="148" mass="15934">MRTVILGVIGSDAHVVGITILERAFEAAGFNVVNLGVQSSQSEFIDAADEHDAEAILVSSLYGHAEQDCQGFQQQINEAGLDVTTYIGGNLAVGQDSFEETRETFKALGFDRVFNSETDPEEAIEALKADLGHRSREEASSEKVQLGS</sequence>
<comment type="function">
    <text evidence="1">Catalyzes the carbon skeleton rearrangement of L-glutamate to L-threo-3-methylaspartate ((2S,3S)-3-methylaspartate).</text>
</comment>
<comment type="catalytic activity">
    <reaction evidence="1">
        <text>(2S,3S)-3-methyl-L-aspartate = L-glutamate</text>
        <dbReference type="Rhea" id="RHEA:12857"/>
        <dbReference type="ChEBI" id="CHEBI:29985"/>
        <dbReference type="ChEBI" id="CHEBI:58724"/>
        <dbReference type="EC" id="5.4.99.1"/>
    </reaction>
</comment>
<comment type="cofactor">
    <cofactor evidence="1">
        <name>adenosylcob(III)alamin</name>
        <dbReference type="ChEBI" id="CHEBI:18408"/>
    </cofactor>
</comment>
<comment type="pathway">
    <text evidence="1">Amino-acid degradation; L-glutamate degradation via mesaconate pathway; acetate and pyruvate from L-glutamate: step 1/4.</text>
</comment>
<comment type="subunit">
    <text evidence="1">Heterotetramer composed of 2 epsilon subunits (GlmE) and 2 sigma subunits (GlmS). GlmE exists as a homodimer and GlmS as a monomer.</text>
</comment>
<comment type="similarity">
    <text evidence="1">Belongs to the methylaspartate mutase GlmS subunit family.</text>
</comment>
<gene>
    <name evidence="1" type="primary">glmS2</name>
    <name type="synonym">mamA2</name>
    <name type="ordered locus">rrnAC0984</name>
</gene>
<reference key="1">
    <citation type="journal article" date="2004" name="Genome Res.">
        <title>Genome sequence of Haloarcula marismortui: a halophilic archaeon from the Dead Sea.</title>
        <authorList>
            <person name="Baliga N.S."/>
            <person name="Bonneau R."/>
            <person name="Facciotti M.T."/>
            <person name="Pan M."/>
            <person name="Glusman G."/>
            <person name="Deutsch E.W."/>
            <person name="Shannon P."/>
            <person name="Chiu Y."/>
            <person name="Weng R.S."/>
            <person name="Gan R.R."/>
            <person name="Hung P."/>
            <person name="Date S.V."/>
            <person name="Marcotte E."/>
            <person name="Hood L."/>
            <person name="Ng W.V."/>
        </authorList>
    </citation>
    <scope>NUCLEOTIDE SEQUENCE [LARGE SCALE GENOMIC DNA]</scope>
    <source>
        <strain>ATCC 43049 / DSM 3752 / JCM 8966 / VKM B-1809</strain>
    </source>
</reference>
<dbReference type="EC" id="5.4.99.1" evidence="1"/>
<dbReference type="EMBL" id="AY596297">
    <property type="protein sequence ID" value="AAV45952.1"/>
    <property type="molecule type" value="Genomic_DNA"/>
</dbReference>
<dbReference type="SMR" id="Q5V3F0"/>
<dbReference type="STRING" id="272569.rrnAC0984"/>
<dbReference type="PaxDb" id="272569-rrnAC0984"/>
<dbReference type="EnsemblBacteria" id="AAV45952">
    <property type="protein sequence ID" value="AAV45952"/>
    <property type="gene ID" value="rrnAC0984"/>
</dbReference>
<dbReference type="KEGG" id="hma:rrnAC0984"/>
<dbReference type="PATRIC" id="fig|272569.17.peg.1713"/>
<dbReference type="eggNOG" id="arCOG01710">
    <property type="taxonomic scope" value="Archaea"/>
</dbReference>
<dbReference type="HOGENOM" id="CLU_136705_0_0_2"/>
<dbReference type="UniPathway" id="UPA00561">
    <property type="reaction ID" value="UER00617"/>
</dbReference>
<dbReference type="Proteomes" id="UP000001169">
    <property type="component" value="Chromosome I"/>
</dbReference>
<dbReference type="GO" id="GO:0031419">
    <property type="term" value="F:cobalamin binding"/>
    <property type="evidence" value="ECO:0007669"/>
    <property type="project" value="UniProtKB-KW"/>
</dbReference>
<dbReference type="GO" id="GO:0046872">
    <property type="term" value="F:metal ion binding"/>
    <property type="evidence" value="ECO:0007669"/>
    <property type="project" value="UniProtKB-KW"/>
</dbReference>
<dbReference type="GO" id="GO:0050097">
    <property type="term" value="F:methylaspartate mutase activity"/>
    <property type="evidence" value="ECO:0007669"/>
    <property type="project" value="UniProtKB-UniRule"/>
</dbReference>
<dbReference type="GO" id="GO:0019670">
    <property type="term" value="P:anaerobic glutamate catabolic process"/>
    <property type="evidence" value="ECO:0007669"/>
    <property type="project" value="InterPro"/>
</dbReference>
<dbReference type="GO" id="GO:0019553">
    <property type="term" value="P:glutamate catabolic process via L-citramalate"/>
    <property type="evidence" value="ECO:0007669"/>
    <property type="project" value="UniProtKB-UniRule"/>
</dbReference>
<dbReference type="CDD" id="cd02072">
    <property type="entry name" value="Glm_B12_BD"/>
    <property type="match status" value="1"/>
</dbReference>
<dbReference type="Gene3D" id="3.40.50.280">
    <property type="entry name" value="Cobalamin-binding domain"/>
    <property type="match status" value="1"/>
</dbReference>
<dbReference type="HAMAP" id="MF_00526">
    <property type="entry name" value="Me_Asp_mutase_S"/>
    <property type="match status" value="1"/>
</dbReference>
<dbReference type="InterPro" id="IPR006158">
    <property type="entry name" value="Cobalamin-bd"/>
</dbReference>
<dbReference type="InterPro" id="IPR036724">
    <property type="entry name" value="Cobalamin-bd_sf"/>
</dbReference>
<dbReference type="InterPro" id="IPR006394">
    <property type="entry name" value="GlmS"/>
</dbReference>
<dbReference type="NCBIfam" id="TIGR01501">
    <property type="entry name" value="MthylAspMutase"/>
    <property type="match status" value="1"/>
</dbReference>
<dbReference type="NCBIfam" id="NF002612">
    <property type="entry name" value="PRK02261.1"/>
    <property type="match status" value="1"/>
</dbReference>
<dbReference type="Pfam" id="PF02310">
    <property type="entry name" value="B12-binding"/>
    <property type="match status" value="1"/>
</dbReference>
<dbReference type="SUPFAM" id="SSF52242">
    <property type="entry name" value="Cobalamin (vitamin B12)-binding domain"/>
    <property type="match status" value="1"/>
</dbReference>
<dbReference type="PROSITE" id="PS51332">
    <property type="entry name" value="B12_BINDING"/>
    <property type="match status" value="1"/>
</dbReference>
<proteinExistence type="inferred from homology"/>
<keyword id="KW-0846">Cobalamin</keyword>
<keyword id="KW-0170">Cobalt</keyword>
<keyword id="KW-0413">Isomerase</keyword>
<keyword id="KW-0479">Metal-binding</keyword>
<keyword id="KW-1185">Reference proteome</keyword>
<accession>Q5V3F0</accession>
<organism>
    <name type="scientific">Haloarcula marismortui (strain ATCC 43049 / DSM 3752 / JCM 8966 / VKM B-1809)</name>
    <name type="common">Halobacterium marismortui</name>
    <dbReference type="NCBI Taxonomy" id="272569"/>
    <lineage>
        <taxon>Archaea</taxon>
        <taxon>Methanobacteriati</taxon>
        <taxon>Methanobacteriota</taxon>
        <taxon>Stenosarchaea group</taxon>
        <taxon>Halobacteria</taxon>
        <taxon>Halobacteriales</taxon>
        <taxon>Haloarculaceae</taxon>
        <taxon>Haloarcula</taxon>
    </lineage>
</organism>
<name>GMSS2_HALMA</name>
<feature type="chain" id="PRO_0000278196" description="Glutamate mutase sigma subunit 2">
    <location>
        <begin position="1"/>
        <end position="148"/>
    </location>
</feature>
<feature type="domain" description="B12-binding" evidence="1">
    <location>
        <begin position="1"/>
        <end position="134"/>
    </location>
</feature>
<feature type="region of interest" description="Disordered" evidence="2">
    <location>
        <begin position="129"/>
        <end position="148"/>
    </location>
</feature>
<feature type="compositionally biased region" description="Basic and acidic residues" evidence="2">
    <location>
        <begin position="129"/>
        <end position="141"/>
    </location>
</feature>
<feature type="binding site" evidence="1">
    <location>
        <begin position="11"/>
        <end position="15"/>
    </location>
    <ligand>
        <name>adenosylcob(III)alamin</name>
        <dbReference type="ChEBI" id="CHEBI:18408"/>
    </ligand>
</feature>
<feature type="binding site" description="axial binding residue" evidence="1">
    <location>
        <position position="14"/>
    </location>
    <ligand>
        <name>adenosylcob(III)alamin</name>
        <dbReference type="ChEBI" id="CHEBI:18408"/>
    </ligand>
    <ligandPart>
        <name>Co</name>
        <dbReference type="ChEBI" id="CHEBI:27638"/>
    </ligandPart>
</feature>
<feature type="binding site" evidence="1">
    <location>
        <begin position="59"/>
        <end position="61"/>
    </location>
    <ligand>
        <name>adenosylcob(III)alamin</name>
        <dbReference type="ChEBI" id="CHEBI:18408"/>
    </ligand>
</feature>
<feature type="binding site" evidence="1">
    <location>
        <begin position="90"/>
        <end position="94"/>
    </location>
    <ligand>
        <name>adenosylcob(III)alamin</name>
        <dbReference type="ChEBI" id="CHEBI:18408"/>
    </ligand>
</feature>
<protein>
    <recommendedName>
        <fullName evidence="1">Glutamate mutase sigma subunit 2</fullName>
        <ecNumber evidence="1">5.4.99.1</ecNumber>
    </recommendedName>
    <alternativeName>
        <fullName evidence="1">Glutamate mutase S chain 2</fullName>
    </alternativeName>
    <alternativeName>
        <fullName evidence="1">Glutamate mutase small subunit 2</fullName>
    </alternativeName>
    <alternativeName>
        <fullName evidence="1">Methylaspartate mutase 2</fullName>
    </alternativeName>
</protein>
<evidence type="ECO:0000255" key="1">
    <source>
        <dbReference type="HAMAP-Rule" id="MF_00526"/>
    </source>
</evidence>
<evidence type="ECO:0000256" key="2">
    <source>
        <dbReference type="SAM" id="MobiDB-lite"/>
    </source>
</evidence>